<accession>B4TAZ0</accession>
<evidence type="ECO:0000255" key="1">
    <source>
        <dbReference type="HAMAP-Rule" id="MF_01661"/>
    </source>
</evidence>
<gene>
    <name evidence="1" type="primary">rbsD</name>
    <name type="ordered locus">SeHA_C4214</name>
</gene>
<reference key="1">
    <citation type="journal article" date="2011" name="J. Bacteriol.">
        <title>Comparative genomics of 28 Salmonella enterica isolates: evidence for CRISPR-mediated adaptive sublineage evolution.</title>
        <authorList>
            <person name="Fricke W.F."/>
            <person name="Mammel M.K."/>
            <person name="McDermott P.F."/>
            <person name="Tartera C."/>
            <person name="White D.G."/>
            <person name="Leclerc J.E."/>
            <person name="Ravel J."/>
            <person name="Cebula T.A."/>
        </authorList>
    </citation>
    <scope>NUCLEOTIDE SEQUENCE [LARGE SCALE GENOMIC DNA]</scope>
    <source>
        <strain>SL476</strain>
    </source>
</reference>
<comment type="function">
    <text evidence="1">Catalyzes the interconversion of beta-pyran and beta-furan forms of D-ribose.</text>
</comment>
<comment type="catalytic activity">
    <reaction evidence="1">
        <text>beta-D-ribopyranose = beta-D-ribofuranose</text>
        <dbReference type="Rhea" id="RHEA:25432"/>
        <dbReference type="ChEBI" id="CHEBI:27476"/>
        <dbReference type="ChEBI" id="CHEBI:47002"/>
        <dbReference type="EC" id="5.4.99.62"/>
    </reaction>
</comment>
<comment type="pathway">
    <text evidence="1">Carbohydrate metabolism; D-ribose degradation; D-ribose 5-phosphate from beta-D-ribopyranose: step 1/2.</text>
</comment>
<comment type="subunit">
    <text evidence="1">Homodecamer.</text>
</comment>
<comment type="subcellular location">
    <subcellularLocation>
        <location evidence="1">Cytoplasm</location>
    </subcellularLocation>
</comment>
<comment type="similarity">
    <text evidence="1">Belongs to the RbsD / FucU family. RbsD subfamily.</text>
</comment>
<feature type="chain" id="PRO_1000187162" description="D-ribose pyranase">
    <location>
        <begin position="1"/>
        <end position="139"/>
    </location>
</feature>
<feature type="active site" description="Proton donor" evidence="1">
    <location>
        <position position="20"/>
    </location>
</feature>
<feature type="binding site" evidence="1">
    <location>
        <position position="28"/>
    </location>
    <ligand>
        <name>substrate</name>
    </ligand>
</feature>
<feature type="binding site" evidence="1">
    <location>
        <position position="106"/>
    </location>
    <ligand>
        <name>substrate</name>
    </ligand>
</feature>
<feature type="binding site" evidence="1">
    <location>
        <begin position="128"/>
        <end position="130"/>
    </location>
    <ligand>
        <name>substrate</name>
    </ligand>
</feature>
<sequence length="139" mass="15189">MKKGTVLNSEISSVISRLGHTDTLVVCDAGLPIPNSTARIDMALTQGVPSFMQVVDVVTREMQVEAAILATEIKQQNPQLHETLLTHLEQLQQHQGNTIKISYTTHEQFKKLTADSQAVIRSGECSPYANVILCAGVTF</sequence>
<name>RBSD_SALHS</name>
<dbReference type="EC" id="5.4.99.62" evidence="1"/>
<dbReference type="EMBL" id="CP001120">
    <property type="protein sequence ID" value="ACF65984.1"/>
    <property type="molecule type" value="Genomic_DNA"/>
</dbReference>
<dbReference type="RefSeq" id="WP_000715944.1">
    <property type="nucleotide sequence ID" value="NC_011083.1"/>
</dbReference>
<dbReference type="SMR" id="B4TAZ0"/>
<dbReference type="KEGG" id="seh:SeHA_C4214"/>
<dbReference type="HOGENOM" id="CLU_135498_0_0_6"/>
<dbReference type="UniPathway" id="UPA00916">
    <property type="reaction ID" value="UER00888"/>
</dbReference>
<dbReference type="Proteomes" id="UP000001866">
    <property type="component" value="Chromosome"/>
</dbReference>
<dbReference type="GO" id="GO:0005829">
    <property type="term" value="C:cytosol"/>
    <property type="evidence" value="ECO:0007669"/>
    <property type="project" value="TreeGrafter"/>
</dbReference>
<dbReference type="GO" id="GO:0062193">
    <property type="term" value="F:D-ribose pyranase activity"/>
    <property type="evidence" value="ECO:0007669"/>
    <property type="project" value="UniProtKB-EC"/>
</dbReference>
<dbReference type="GO" id="GO:0016872">
    <property type="term" value="F:intramolecular lyase activity"/>
    <property type="evidence" value="ECO:0007669"/>
    <property type="project" value="UniProtKB-UniRule"/>
</dbReference>
<dbReference type="GO" id="GO:0048029">
    <property type="term" value="F:monosaccharide binding"/>
    <property type="evidence" value="ECO:0007669"/>
    <property type="project" value="InterPro"/>
</dbReference>
<dbReference type="GO" id="GO:0019303">
    <property type="term" value="P:D-ribose catabolic process"/>
    <property type="evidence" value="ECO:0007669"/>
    <property type="project" value="UniProtKB-UniRule"/>
</dbReference>
<dbReference type="FunFam" id="3.40.1650.10:FF:000002">
    <property type="entry name" value="D-ribose pyranase"/>
    <property type="match status" value="1"/>
</dbReference>
<dbReference type="Gene3D" id="3.40.1650.10">
    <property type="entry name" value="RbsD-like domain"/>
    <property type="match status" value="1"/>
</dbReference>
<dbReference type="HAMAP" id="MF_01661">
    <property type="entry name" value="D_rib_pyranase"/>
    <property type="match status" value="1"/>
</dbReference>
<dbReference type="InterPro" id="IPR023064">
    <property type="entry name" value="D-ribose_pyranase"/>
</dbReference>
<dbReference type="InterPro" id="IPR023750">
    <property type="entry name" value="RbsD-like_sf"/>
</dbReference>
<dbReference type="InterPro" id="IPR007721">
    <property type="entry name" value="RbsD_FucU"/>
</dbReference>
<dbReference type="NCBIfam" id="NF008761">
    <property type="entry name" value="PRK11797.1"/>
    <property type="match status" value="1"/>
</dbReference>
<dbReference type="PANTHER" id="PTHR37831">
    <property type="entry name" value="D-RIBOSE PYRANASE"/>
    <property type="match status" value="1"/>
</dbReference>
<dbReference type="PANTHER" id="PTHR37831:SF1">
    <property type="entry name" value="D-RIBOSE PYRANASE"/>
    <property type="match status" value="1"/>
</dbReference>
<dbReference type="Pfam" id="PF05025">
    <property type="entry name" value="RbsD_FucU"/>
    <property type="match status" value="1"/>
</dbReference>
<dbReference type="SUPFAM" id="SSF102546">
    <property type="entry name" value="RbsD-like"/>
    <property type="match status" value="1"/>
</dbReference>
<protein>
    <recommendedName>
        <fullName evidence="1">D-ribose pyranase</fullName>
        <ecNumber evidence="1">5.4.99.62</ecNumber>
    </recommendedName>
</protein>
<organism>
    <name type="scientific">Salmonella heidelberg (strain SL476)</name>
    <dbReference type="NCBI Taxonomy" id="454169"/>
    <lineage>
        <taxon>Bacteria</taxon>
        <taxon>Pseudomonadati</taxon>
        <taxon>Pseudomonadota</taxon>
        <taxon>Gammaproteobacteria</taxon>
        <taxon>Enterobacterales</taxon>
        <taxon>Enterobacteriaceae</taxon>
        <taxon>Salmonella</taxon>
    </lineage>
</organism>
<keyword id="KW-0119">Carbohydrate metabolism</keyword>
<keyword id="KW-0963">Cytoplasm</keyword>
<keyword id="KW-0413">Isomerase</keyword>
<proteinExistence type="inferred from homology"/>